<organism>
    <name type="scientific">Schizosaccharomyces pombe (strain 972 / ATCC 24843)</name>
    <name type="common">Fission yeast</name>
    <dbReference type="NCBI Taxonomy" id="284812"/>
    <lineage>
        <taxon>Eukaryota</taxon>
        <taxon>Fungi</taxon>
        <taxon>Dikarya</taxon>
        <taxon>Ascomycota</taxon>
        <taxon>Taphrinomycotina</taxon>
        <taxon>Schizosaccharomycetes</taxon>
        <taxon>Schizosaccharomycetales</taxon>
        <taxon>Schizosaccharomycetaceae</taxon>
        <taxon>Schizosaccharomyces</taxon>
    </lineage>
</organism>
<protein>
    <recommendedName>
        <fullName>RNA polymerase I-specific transcription initiation factor rrn11</fullName>
    </recommendedName>
</protein>
<sequence>MFSPCTVKEKRSTLRSVAPNPESSVIPPIPLPSRRYKTRHIDALCSLMHLCLLRKDYPRASRAFSLLLRSKSVDISKLWNIGLEILNKVNPEASSEYMERLIARYPARPSINNSYPNRNAEHFFPAYIMLLIQRQEYNKAMKLLDEYLLLPPYNQNPALHEYSGMLCFELAKEEASESERTKWIEKAKYNFSNAGIDVEL</sequence>
<feature type="chain" id="PRO_0000097446" description="RNA polymerase I-specific transcription initiation factor rrn11">
    <location>
        <begin position="1"/>
        <end position="200"/>
    </location>
</feature>
<name>RRN11_SCHPO</name>
<gene>
    <name type="primary">rrn11</name>
    <name type="ORF">SPBC725.17c</name>
</gene>
<keyword id="KW-0539">Nucleus</keyword>
<keyword id="KW-1185">Reference proteome</keyword>
<keyword id="KW-0804">Transcription</keyword>
<keyword id="KW-0805">Transcription regulation</keyword>
<evidence type="ECO:0000269" key="1">
    <source>
    </source>
</evidence>
<evidence type="ECO:0000305" key="2"/>
<dbReference type="EMBL" id="CU329671">
    <property type="protein sequence ID" value="CAA22189.1"/>
    <property type="molecule type" value="Genomic_DNA"/>
</dbReference>
<dbReference type="PIR" id="T40669">
    <property type="entry name" value="T40669"/>
</dbReference>
<dbReference type="RefSeq" id="NP_595497.1">
    <property type="nucleotide sequence ID" value="NM_001021408.2"/>
</dbReference>
<dbReference type="SMR" id="O94332"/>
<dbReference type="BioGRID" id="277698">
    <property type="interactions" value="11"/>
</dbReference>
<dbReference type="FunCoup" id="O94332">
    <property type="interactions" value="58"/>
</dbReference>
<dbReference type="STRING" id="284812.O94332"/>
<dbReference type="PaxDb" id="4896-SPBC725.17c.1"/>
<dbReference type="EnsemblFungi" id="SPBC725.17c.1">
    <property type="protein sequence ID" value="SPBC725.17c.1:pep"/>
    <property type="gene ID" value="SPBC725.17c"/>
</dbReference>
<dbReference type="GeneID" id="2541184"/>
<dbReference type="KEGG" id="spo:2541184"/>
<dbReference type="PomBase" id="SPBC725.17c">
    <property type="gene designation" value="rrn11"/>
</dbReference>
<dbReference type="VEuPathDB" id="FungiDB:SPBC725.17c"/>
<dbReference type="eggNOG" id="ENOG502SC4N">
    <property type="taxonomic scope" value="Eukaryota"/>
</dbReference>
<dbReference type="HOGENOM" id="CLU_1327064_0_0_1"/>
<dbReference type="InParanoid" id="O94332"/>
<dbReference type="OMA" id="WNIGLEI"/>
<dbReference type="PhylomeDB" id="O94332"/>
<dbReference type="PRO" id="PR:O94332"/>
<dbReference type="Proteomes" id="UP000002485">
    <property type="component" value="Chromosome II"/>
</dbReference>
<dbReference type="GO" id="GO:0032153">
    <property type="term" value="C:cell division site"/>
    <property type="evidence" value="ECO:0007005"/>
    <property type="project" value="PomBase"/>
</dbReference>
<dbReference type="GO" id="GO:0005829">
    <property type="term" value="C:cytosol"/>
    <property type="evidence" value="ECO:0007005"/>
    <property type="project" value="PomBase"/>
</dbReference>
<dbReference type="GO" id="GO:0072686">
    <property type="term" value="C:mitotic spindle"/>
    <property type="evidence" value="ECO:0007005"/>
    <property type="project" value="PomBase"/>
</dbReference>
<dbReference type="GO" id="GO:0005634">
    <property type="term" value="C:nucleus"/>
    <property type="evidence" value="ECO:0007005"/>
    <property type="project" value="PomBase"/>
</dbReference>
<dbReference type="GO" id="GO:0070860">
    <property type="term" value="C:RNA polymerase I core factor complex"/>
    <property type="evidence" value="ECO:0000318"/>
    <property type="project" value="GO_Central"/>
</dbReference>
<dbReference type="GO" id="GO:0000120">
    <property type="term" value="C:RNA polymerase I transcription regulator complex"/>
    <property type="evidence" value="ECO:0000314"/>
    <property type="project" value="PomBase"/>
</dbReference>
<dbReference type="GO" id="GO:0001164">
    <property type="term" value="F:RNA polymerase I core promoter sequence-specific DNA binding"/>
    <property type="evidence" value="ECO:0000318"/>
    <property type="project" value="GO_Central"/>
</dbReference>
<dbReference type="GO" id="GO:0001181">
    <property type="term" value="F:RNA polymerase I general transcription initiation factor activity"/>
    <property type="evidence" value="ECO:0000314"/>
    <property type="project" value="PomBase"/>
</dbReference>
<dbReference type="GO" id="GO:0017025">
    <property type="term" value="F:TBP-class protein binding"/>
    <property type="evidence" value="ECO:0000318"/>
    <property type="project" value="GO_Central"/>
</dbReference>
<dbReference type="GO" id="GO:0042790">
    <property type="term" value="P:nucleolar large rRNA transcription by RNA polymerase I"/>
    <property type="evidence" value="ECO:0000318"/>
    <property type="project" value="GO_Central"/>
</dbReference>
<dbReference type="GO" id="GO:0006361">
    <property type="term" value="P:transcription initiation at RNA polymerase I promoter"/>
    <property type="evidence" value="ECO:0000314"/>
    <property type="project" value="PomBase"/>
</dbReference>
<dbReference type="Gene3D" id="1.25.40.10">
    <property type="entry name" value="Tetratricopeptide repeat domain"/>
    <property type="match status" value="1"/>
</dbReference>
<dbReference type="InterPro" id="IPR053029">
    <property type="entry name" value="RNA_pol_I-specific_init_factor"/>
</dbReference>
<dbReference type="InterPro" id="IPR007224">
    <property type="entry name" value="TIF_Rrn11"/>
</dbReference>
<dbReference type="InterPro" id="IPR011990">
    <property type="entry name" value="TPR-like_helical_dom_sf"/>
</dbReference>
<dbReference type="PANTHER" id="PTHR28244">
    <property type="entry name" value="RNA POLYMERASE I-SPECIFIC TRANSCRIPTION INITIATION FACTOR RRN11"/>
    <property type="match status" value="1"/>
</dbReference>
<dbReference type="PANTHER" id="PTHR28244:SF1">
    <property type="entry name" value="RNA POLYMERASE I-SPECIFIC TRANSCRIPTION INITIATION FACTOR RRN11"/>
    <property type="match status" value="1"/>
</dbReference>
<dbReference type="Pfam" id="PF04090">
    <property type="entry name" value="Rrn11"/>
    <property type="match status" value="1"/>
</dbReference>
<dbReference type="SUPFAM" id="SSF48452">
    <property type="entry name" value="TPR-like"/>
    <property type="match status" value="1"/>
</dbReference>
<proteinExistence type="predicted"/>
<comment type="function">
    <text evidence="1">Subunit of a multiprotein complex essential for the initiation of rDNA transcription by RNA polymerase I. Binding to the DNA template is dependent on the initial binding of other factors.</text>
</comment>
<comment type="subcellular location">
    <subcellularLocation>
        <location evidence="2">Nucleus</location>
    </subcellularLocation>
</comment>
<reference key="1">
    <citation type="journal article" date="2002" name="Nature">
        <title>The genome sequence of Schizosaccharomyces pombe.</title>
        <authorList>
            <person name="Wood V."/>
            <person name="Gwilliam R."/>
            <person name="Rajandream M.A."/>
            <person name="Lyne M.H."/>
            <person name="Lyne R."/>
            <person name="Stewart A."/>
            <person name="Sgouros J.G."/>
            <person name="Peat N."/>
            <person name="Hayles J."/>
            <person name="Baker S.G."/>
            <person name="Basham D."/>
            <person name="Bowman S."/>
            <person name="Brooks K."/>
            <person name="Brown D."/>
            <person name="Brown S."/>
            <person name="Chillingworth T."/>
            <person name="Churcher C.M."/>
            <person name="Collins M."/>
            <person name="Connor R."/>
            <person name="Cronin A."/>
            <person name="Davis P."/>
            <person name="Feltwell T."/>
            <person name="Fraser A."/>
            <person name="Gentles S."/>
            <person name="Goble A."/>
            <person name="Hamlin N."/>
            <person name="Harris D.E."/>
            <person name="Hidalgo J."/>
            <person name="Hodgson G."/>
            <person name="Holroyd S."/>
            <person name="Hornsby T."/>
            <person name="Howarth S."/>
            <person name="Huckle E.J."/>
            <person name="Hunt S."/>
            <person name="Jagels K."/>
            <person name="James K.D."/>
            <person name="Jones L."/>
            <person name="Jones M."/>
            <person name="Leather S."/>
            <person name="McDonald S."/>
            <person name="McLean J."/>
            <person name="Mooney P."/>
            <person name="Moule S."/>
            <person name="Mungall K.L."/>
            <person name="Murphy L.D."/>
            <person name="Niblett D."/>
            <person name="Odell C."/>
            <person name="Oliver K."/>
            <person name="O'Neil S."/>
            <person name="Pearson D."/>
            <person name="Quail M.A."/>
            <person name="Rabbinowitsch E."/>
            <person name="Rutherford K.M."/>
            <person name="Rutter S."/>
            <person name="Saunders D."/>
            <person name="Seeger K."/>
            <person name="Sharp S."/>
            <person name="Skelton J."/>
            <person name="Simmonds M.N."/>
            <person name="Squares R."/>
            <person name="Squares S."/>
            <person name="Stevens K."/>
            <person name="Taylor K."/>
            <person name="Taylor R.G."/>
            <person name="Tivey A."/>
            <person name="Walsh S.V."/>
            <person name="Warren T."/>
            <person name="Whitehead S."/>
            <person name="Woodward J.R."/>
            <person name="Volckaert G."/>
            <person name="Aert R."/>
            <person name="Robben J."/>
            <person name="Grymonprez B."/>
            <person name="Weltjens I."/>
            <person name="Vanstreels E."/>
            <person name="Rieger M."/>
            <person name="Schaefer M."/>
            <person name="Mueller-Auer S."/>
            <person name="Gabel C."/>
            <person name="Fuchs M."/>
            <person name="Duesterhoeft A."/>
            <person name="Fritzc C."/>
            <person name="Holzer E."/>
            <person name="Moestl D."/>
            <person name="Hilbert H."/>
            <person name="Borzym K."/>
            <person name="Langer I."/>
            <person name="Beck A."/>
            <person name="Lehrach H."/>
            <person name="Reinhardt R."/>
            <person name="Pohl T.M."/>
            <person name="Eger P."/>
            <person name="Zimmermann W."/>
            <person name="Wedler H."/>
            <person name="Wambutt R."/>
            <person name="Purnelle B."/>
            <person name="Goffeau A."/>
            <person name="Cadieu E."/>
            <person name="Dreano S."/>
            <person name="Gloux S."/>
            <person name="Lelaure V."/>
            <person name="Mottier S."/>
            <person name="Galibert F."/>
            <person name="Aves S.J."/>
            <person name="Xiang Z."/>
            <person name="Hunt C."/>
            <person name="Moore K."/>
            <person name="Hurst S.M."/>
            <person name="Lucas M."/>
            <person name="Rochet M."/>
            <person name="Gaillardin C."/>
            <person name="Tallada V.A."/>
            <person name="Garzon A."/>
            <person name="Thode G."/>
            <person name="Daga R.R."/>
            <person name="Cruzado L."/>
            <person name="Jimenez J."/>
            <person name="Sanchez M."/>
            <person name="del Rey F."/>
            <person name="Benito J."/>
            <person name="Dominguez A."/>
            <person name="Revuelta J.L."/>
            <person name="Moreno S."/>
            <person name="Armstrong J."/>
            <person name="Forsburg S.L."/>
            <person name="Cerutti L."/>
            <person name="Lowe T."/>
            <person name="McCombie W.R."/>
            <person name="Paulsen I."/>
            <person name="Potashkin J."/>
            <person name="Shpakovski G.V."/>
            <person name="Ussery D."/>
            <person name="Barrell B.G."/>
            <person name="Nurse P."/>
        </authorList>
    </citation>
    <scope>NUCLEOTIDE SEQUENCE [LARGE SCALE GENOMIC DNA]</scope>
    <source>
        <strain>972 / ATCC 24843</strain>
    </source>
</reference>
<reference key="2">
    <citation type="journal article" date="2002" name="Gene">
        <title>Characterization of a fission yeast subunit of an RNA polymerase I essential transcription initiation factor, SpRrn7h/TAF(I)68, that bridges yeast and mammals: association with SpRrn11h and the core ribosomal RNA gene promoter.</title>
        <authorList>
            <person name="Boukhgalter B."/>
            <person name="Liu M."/>
            <person name="Guo A."/>
            <person name="Tripp M."/>
            <person name="Tran K."/>
            <person name="Huynh C."/>
            <person name="Pape L."/>
        </authorList>
    </citation>
    <scope>IDENTIFICATION</scope>
    <scope>FUNCTION</scope>
</reference>
<accession>O94332</accession>